<gene>
    <name evidence="1" type="primary">kdsB</name>
    <name type="ordered locus">OCAR_7435</name>
    <name type="ordered locus">OCA5_c06970</name>
</gene>
<comment type="function">
    <text evidence="1">Activates KDO (a required 8-carbon sugar) for incorporation into bacterial lipopolysaccharide in Gram-negative bacteria.</text>
</comment>
<comment type="catalytic activity">
    <reaction evidence="1">
        <text>3-deoxy-alpha-D-manno-oct-2-ulosonate + CTP = CMP-3-deoxy-beta-D-manno-octulosonate + diphosphate</text>
        <dbReference type="Rhea" id="RHEA:23448"/>
        <dbReference type="ChEBI" id="CHEBI:33019"/>
        <dbReference type="ChEBI" id="CHEBI:37563"/>
        <dbReference type="ChEBI" id="CHEBI:85986"/>
        <dbReference type="ChEBI" id="CHEBI:85987"/>
        <dbReference type="EC" id="2.7.7.38"/>
    </reaction>
</comment>
<comment type="pathway">
    <text evidence="1">Nucleotide-sugar biosynthesis; CMP-3-deoxy-D-manno-octulosonate biosynthesis; CMP-3-deoxy-D-manno-octulosonate from 3-deoxy-D-manno-octulosonate and CTP: step 1/1.</text>
</comment>
<comment type="pathway">
    <text evidence="1">Bacterial outer membrane biogenesis; lipopolysaccharide biosynthesis.</text>
</comment>
<comment type="subcellular location">
    <subcellularLocation>
        <location evidence="1">Cytoplasm</location>
    </subcellularLocation>
</comment>
<comment type="similarity">
    <text evidence="1">Belongs to the KdsB family.</text>
</comment>
<keyword id="KW-0963">Cytoplasm</keyword>
<keyword id="KW-0448">Lipopolysaccharide biosynthesis</keyword>
<keyword id="KW-0548">Nucleotidyltransferase</keyword>
<keyword id="KW-1185">Reference proteome</keyword>
<keyword id="KW-0808">Transferase</keyword>
<organism>
    <name type="scientific">Afipia carboxidovorans (strain ATCC 49405 / DSM 1227 / KCTC 32145 / OM5)</name>
    <name type="common">Oligotropha carboxidovorans</name>
    <dbReference type="NCBI Taxonomy" id="504832"/>
    <lineage>
        <taxon>Bacteria</taxon>
        <taxon>Pseudomonadati</taxon>
        <taxon>Pseudomonadota</taxon>
        <taxon>Alphaproteobacteria</taxon>
        <taxon>Hyphomicrobiales</taxon>
        <taxon>Nitrobacteraceae</taxon>
        <taxon>Afipia</taxon>
    </lineage>
</organism>
<reference key="1">
    <citation type="journal article" date="2008" name="J. Bacteriol.">
        <title>Genome sequence of the chemolithoautotrophic bacterium Oligotropha carboxidovorans OM5T.</title>
        <authorList>
            <person name="Paul D."/>
            <person name="Bridges S."/>
            <person name="Burgess S.C."/>
            <person name="Dandass Y."/>
            <person name="Lawrence M.L."/>
        </authorList>
    </citation>
    <scope>NUCLEOTIDE SEQUENCE [LARGE SCALE GENOMIC DNA]</scope>
    <source>
        <strain>ATCC 49405 / DSM 1227 / KCTC 32145 / OM5</strain>
    </source>
</reference>
<reference key="2">
    <citation type="journal article" date="2011" name="J. Bacteriol.">
        <title>Complete genome sequences of the chemolithoautotrophic Oligotropha carboxidovorans strains OM4 and OM5.</title>
        <authorList>
            <person name="Volland S."/>
            <person name="Rachinger M."/>
            <person name="Strittmatter A."/>
            <person name="Daniel R."/>
            <person name="Gottschalk G."/>
            <person name="Meyer O."/>
        </authorList>
    </citation>
    <scope>NUCLEOTIDE SEQUENCE [LARGE SCALE GENOMIC DNA]</scope>
    <source>
        <strain>ATCC 49405 / DSM 1227 / KCTC 32145 / OM5</strain>
    </source>
</reference>
<feature type="chain" id="PRO_0000370111" description="3-deoxy-manno-octulosonate cytidylyltransferase">
    <location>
        <begin position="1"/>
        <end position="247"/>
    </location>
</feature>
<dbReference type="EC" id="2.7.7.38" evidence="1"/>
<dbReference type="EMBL" id="CP001196">
    <property type="protein sequence ID" value="ACI94538.1"/>
    <property type="molecule type" value="Genomic_DNA"/>
</dbReference>
<dbReference type="EMBL" id="CP002826">
    <property type="protein sequence ID" value="AEI05420.1"/>
    <property type="molecule type" value="Genomic_DNA"/>
</dbReference>
<dbReference type="RefSeq" id="WP_012564563.1">
    <property type="nucleotide sequence ID" value="NC_015684.1"/>
</dbReference>
<dbReference type="SMR" id="B6JJE4"/>
<dbReference type="STRING" id="504832.OCA5_c06970"/>
<dbReference type="KEGG" id="oca:OCAR_7435"/>
<dbReference type="KEGG" id="ocg:OCA5_c06970"/>
<dbReference type="PATRIC" id="fig|504832.7.peg.730"/>
<dbReference type="eggNOG" id="COG1212">
    <property type="taxonomic scope" value="Bacteria"/>
</dbReference>
<dbReference type="HOGENOM" id="CLU_065038_0_1_5"/>
<dbReference type="OrthoDB" id="9815559at2"/>
<dbReference type="UniPathway" id="UPA00030"/>
<dbReference type="UniPathway" id="UPA00358">
    <property type="reaction ID" value="UER00476"/>
</dbReference>
<dbReference type="Proteomes" id="UP000007730">
    <property type="component" value="Chromosome"/>
</dbReference>
<dbReference type="GO" id="GO:0005829">
    <property type="term" value="C:cytosol"/>
    <property type="evidence" value="ECO:0007669"/>
    <property type="project" value="TreeGrafter"/>
</dbReference>
<dbReference type="GO" id="GO:0008690">
    <property type="term" value="F:3-deoxy-manno-octulosonate cytidylyltransferase activity"/>
    <property type="evidence" value="ECO:0007669"/>
    <property type="project" value="UniProtKB-UniRule"/>
</dbReference>
<dbReference type="GO" id="GO:0033468">
    <property type="term" value="P:CMP-keto-3-deoxy-D-manno-octulosonic acid biosynthetic process"/>
    <property type="evidence" value="ECO:0007669"/>
    <property type="project" value="UniProtKB-UniRule"/>
</dbReference>
<dbReference type="GO" id="GO:0009103">
    <property type="term" value="P:lipopolysaccharide biosynthetic process"/>
    <property type="evidence" value="ECO:0007669"/>
    <property type="project" value="UniProtKB-UniRule"/>
</dbReference>
<dbReference type="CDD" id="cd02517">
    <property type="entry name" value="CMP-KDO-Synthetase"/>
    <property type="match status" value="1"/>
</dbReference>
<dbReference type="Gene3D" id="3.90.550.10">
    <property type="entry name" value="Spore Coat Polysaccharide Biosynthesis Protein SpsA, Chain A"/>
    <property type="match status" value="1"/>
</dbReference>
<dbReference type="HAMAP" id="MF_00057">
    <property type="entry name" value="KdsB"/>
    <property type="match status" value="1"/>
</dbReference>
<dbReference type="InterPro" id="IPR003329">
    <property type="entry name" value="Cytidylyl_trans"/>
</dbReference>
<dbReference type="InterPro" id="IPR004528">
    <property type="entry name" value="KdsB"/>
</dbReference>
<dbReference type="InterPro" id="IPR029044">
    <property type="entry name" value="Nucleotide-diphossugar_trans"/>
</dbReference>
<dbReference type="NCBIfam" id="TIGR00466">
    <property type="entry name" value="kdsB"/>
    <property type="match status" value="1"/>
</dbReference>
<dbReference type="NCBIfam" id="NF003948">
    <property type="entry name" value="PRK05450.1-1"/>
    <property type="match status" value="1"/>
</dbReference>
<dbReference type="NCBIfam" id="NF003952">
    <property type="entry name" value="PRK05450.1-5"/>
    <property type="match status" value="1"/>
</dbReference>
<dbReference type="PANTHER" id="PTHR42866">
    <property type="entry name" value="3-DEOXY-MANNO-OCTULOSONATE CYTIDYLYLTRANSFERASE"/>
    <property type="match status" value="1"/>
</dbReference>
<dbReference type="PANTHER" id="PTHR42866:SF2">
    <property type="entry name" value="3-DEOXY-MANNO-OCTULOSONATE CYTIDYLYLTRANSFERASE, MITOCHONDRIAL"/>
    <property type="match status" value="1"/>
</dbReference>
<dbReference type="Pfam" id="PF02348">
    <property type="entry name" value="CTP_transf_3"/>
    <property type="match status" value="1"/>
</dbReference>
<dbReference type="SUPFAM" id="SSF53448">
    <property type="entry name" value="Nucleotide-diphospho-sugar transferases"/>
    <property type="match status" value="1"/>
</dbReference>
<accession>B6JJE4</accession>
<accession>F8BY00</accession>
<evidence type="ECO:0000255" key="1">
    <source>
        <dbReference type="HAMAP-Rule" id="MF_00057"/>
    </source>
</evidence>
<protein>
    <recommendedName>
        <fullName evidence="1">3-deoxy-manno-octulosonate cytidylyltransferase</fullName>
        <ecNumber evidence="1">2.7.7.38</ecNumber>
    </recommendedName>
    <alternativeName>
        <fullName evidence="1">CMP-2-keto-3-deoxyoctulosonic acid synthase</fullName>
        <shortName evidence="1">CKS</shortName>
        <shortName evidence="1">CMP-KDO synthase</shortName>
    </alternativeName>
</protein>
<sequence>MTEHDTLVLIPARMAASRLPGKPLLDIAGLPMIAQVLRRAREARLGRVAVATDSAEIAAAVAAEGGEAVMTSADHPSGSDRIFEALEKLDGEGRIKTVINVQGDLPTIAPADIRAVLQPFAEPTVDIATLAAQIRVAAEHDNPNVVKVVGSPLSQDTLRALYFTRCTAPFGEGPRYHHIGLYAYRRTALARFVALPPSSLERREKLEQLRALEAGMRIDVRIVDSVPLGVDTPDDLEAARRILAKQA</sequence>
<name>KDSB_AFIC5</name>
<proteinExistence type="inferred from homology"/>